<organism>
    <name type="scientific">Bacteroides thetaiotaomicron (strain ATCC 29148 / DSM 2079 / JCM 5827 / CCUG 10774 / NCTC 10582 / VPI-5482 / E50)</name>
    <dbReference type="NCBI Taxonomy" id="226186"/>
    <lineage>
        <taxon>Bacteria</taxon>
        <taxon>Pseudomonadati</taxon>
        <taxon>Bacteroidota</taxon>
        <taxon>Bacteroidia</taxon>
        <taxon>Bacteroidales</taxon>
        <taxon>Bacteroidaceae</taxon>
        <taxon>Bacteroides</taxon>
    </lineage>
</organism>
<protein>
    <recommendedName>
        <fullName evidence="1">Phospho-N-acetylmuramoyl-pentapeptide-transferase</fullName>
        <ecNumber evidence="1">2.7.8.13</ecNumber>
    </recommendedName>
    <alternativeName>
        <fullName evidence="1">UDP-MurNAc-pentapeptide phosphotransferase</fullName>
    </alternativeName>
</protein>
<dbReference type="EC" id="2.7.8.13" evidence="1"/>
<dbReference type="EMBL" id="AE015928">
    <property type="protein sequence ID" value="AAO78557.1"/>
    <property type="molecule type" value="Genomic_DNA"/>
</dbReference>
<dbReference type="RefSeq" id="NP_812363.1">
    <property type="nucleotide sequence ID" value="NC_004663.1"/>
</dbReference>
<dbReference type="RefSeq" id="WP_008763716.1">
    <property type="nucleotide sequence ID" value="NZ_UYXG01000003.1"/>
</dbReference>
<dbReference type="SMR" id="Q8A255"/>
<dbReference type="FunCoup" id="Q8A255">
    <property type="interactions" value="391"/>
</dbReference>
<dbReference type="STRING" id="226186.BT_3451"/>
<dbReference type="PaxDb" id="226186-BT_3451"/>
<dbReference type="EnsemblBacteria" id="AAO78557">
    <property type="protein sequence ID" value="AAO78557"/>
    <property type="gene ID" value="BT_3451"/>
</dbReference>
<dbReference type="GeneID" id="60924632"/>
<dbReference type="KEGG" id="bth:BT_3451"/>
<dbReference type="PATRIC" id="fig|226186.12.peg.3518"/>
<dbReference type="eggNOG" id="COG0472">
    <property type="taxonomic scope" value="Bacteria"/>
</dbReference>
<dbReference type="HOGENOM" id="CLU_023982_0_0_10"/>
<dbReference type="InParanoid" id="Q8A255"/>
<dbReference type="OrthoDB" id="9805475at2"/>
<dbReference type="UniPathway" id="UPA00219"/>
<dbReference type="Proteomes" id="UP000001414">
    <property type="component" value="Chromosome"/>
</dbReference>
<dbReference type="GO" id="GO:0005886">
    <property type="term" value="C:plasma membrane"/>
    <property type="evidence" value="ECO:0000318"/>
    <property type="project" value="GO_Central"/>
</dbReference>
<dbReference type="GO" id="GO:0046872">
    <property type="term" value="F:metal ion binding"/>
    <property type="evidence" value="ECO:0007669"/>
    <property type="project" value="UniProtKB-KW"/>
</dbReference>
<dbReference type="GO" id="GO:0008963">
    <property type="term" value="F:phospho-N-acetylmuramoyl-pentapeptide-transferase activity"/>
    <property type="evidence" value="ECO:0007669"/>
    <property type="project" value="UniProtKB-UniRule"/>
</dbReference>
<dbReference type="GO" id="GO:0016780">
    <property type="term" value="F:phosphotransferase activity, for other substituted phosphate groups"/>
    <property type="evidence" value="ECO:0000318"/>
    <property type="project" value="GO_Central"/>
</dbReference>
<dbReference type="GO" id="GO:0051992">
    <property type="term" value="F:UDP-N-acetylmuramoyl-L-alanyl-D-glutamyl-meso-2,6-diaminopimelyl-D-alanyl-D-alanine:undecaprenyl-phosphate transferase activity"/>
    <property type="evidence" value="ECO:0007669"/>
    <property type="project" value="RHEA"/>
</dbReference>
<dbReference type="GO" id="GO:0051301">
    <property type="term" value="P:cell division"/>
    <property type="evidence" value="ECO:0007669"/>
    <property type="project" value="UniProtKB-KW"/>
</dbReference>
<dbReference type="GO" id="GO:0044038">
    <property type="term" value="P:cell wall macromolecule biosynthetic process"/>
    <property type="evidence" value="ECO:0000318"/>
    <property type="project" value="GO_Central"/>
</dbReference>
<dbReference type="GO" id="GO:0071555">
    <property type="term" value="P:cell wall organization"/>
    <property type="evidence" value="ECO:0000318"/>
    <property type="project" value="GO_Central"/>
</dbReference>
<dbReference type="GO" id="GO:0009252">
    <property type="term" value="P:peptidoglycan biosynthetic process"/>
    <property type="evidence" value="ECO:0007669"/>
    <property type="project" value="UniProtKB-UniRule"/>
</dbReference>
<dbReference type="GO" id="GO:0008360">
    <property type="term" value="P:regulation of cell shape"/>
    <property type="evidence" value="ECO:0007669"/>
    <property type="project" value="UniProtKB-KW"/>
</dbReference>
<dbReference type="CDD" id="cd06852">
    <property type="entry name" value="GT_MraY"/>
    <property type="match status" value="1"/>
</dbReference>
<dbReference type="HAMAP" id="MF_00038">
    <property type="entry name" value="MraY"/>
    <property type="match status" value="1"/>
</dbReference>
<dbReference type="InterPro" id="IPR000715">
    <property type="entry name" value="Glycosyl_transferase_4"/>
</dbReference>
<dbReference type="InterPro" id="IPR003524">
    <property type="entry name" value="PNAcMuramoyl-5peptid_Trfase"/>
</dbReference>
<dbReference type="InterPro" id="IPR018480">
    <property type="entry name" value="PNAcMuramoyl-5peptid_Trfase_CS"/>
</dbReference>
<dbReference type="NCBIfam" id="TIGR00445">
    <property type="entry name" value="mraY"/>
    <property type="match status" value="1"/>
</dbReference>
<dbReference type="PANTHER" id="PTHR22926">
    <property type="entry name" value="PHOSPHO-N-ACETYLMURAMOYL-PENTAPEPTIDE-TRANSFERASE"/>
    <property type="match status" value="1"/>
</dbReference>
<dbReference type="PANTHER" id="PTHR22926:SF5">
    <property type="entry name" value="PHOSPHO-N-ACETYLMURAMOYL-PENTAPEPTIDE-TRANSFERASE HOMOLOG"/>
    <property type="match status" value="1"/>
</dbReference>
<dbReference type="Pfam" id="PF00953">
    <property type="entry name" value="Glycos_transf_4"/>
    <property type="match status" value="1"/>
</dbReference>
<dbReference type="PROSITE" id="PS01347">
    <property type="entry name" value="MRAY_1"/>
    <property type="match status" value="1"/>
</dbReference>
<dbReference type="PROSITE" id="PS01348">
    <property type="entry name" value="MRAY_2"/>
    <property type="match status" value="1"/>
</dbReference>
<evidence type="ECO:0000255" key="1">
    <source>
        <dbReference type="HAMAP-Rule" id="MF_00038"/>
    </source>
</evidence>
<keyword id="KW-0131">Cell cycle</keyword>
<keyword id="KW-0132">Cell division</keyword>
<keyword id="KW-0997">Cell inner membrane</keyword>
<keyword id="KW-1003">Cell membrane</keyword>
<keyword id="KW-0133">Cell shape</keyword>
<keyword id="KW-0961">Cell wall biogenesis/degradation</keyword>
<keyword id="KW-0460">Magnesium</keyword>
<keyword id="KW-0472">Membrane</keyword>
<keyword id="KW-0479">Metal-binding</keyword>
<keyword id="KW-0573">Peptidoglycan synthesis</keyword>
<keyword id="KW-1185">Reference proteome</keyword>
<keyword id="KW-0808">Transferase</keyword>
<keyword id="KW-0812">Transmembrane</keyword>
<keyword id="KW-1133">Transmembrane helix</keyword>
<sequence>MLYYLFEWLHKLNFPGAGMFGYTSFRALMAVILALLISSIWGDKFINLLKKKQITETQRDAKTDPFGVNKVGVPSMGGVIIIVAILIPCLLLGKLDNIYMILMLITTVWLGSLGFADDYIKIFKKDKEGLHGKFKIIGQVGLGLIVGLTLYLSPDVVIRENIEVHTPGQEMEVIHGTNDLKSTQTTIPFFKSNNLDYADLVGFMGEHAQTAGWFLFVIITIFVVTAVSNGANLNDGMDGMAAGNSAIIGATLGILAYVSSHIEFASYLNIMYIPGSEELVIYICAFIGALIGFLWYNAYPAQVFMGDTGSLTIGGIIAVFAIIIHKELLIPILCGVFLVENLSVILQRFYYKIGKRKGVKQRLFKRTPIHDHFRTSMSLVEPGCTVKFTKPDQLFHESKITVRFWIVTIVLAAITIITLKIR</sequence>
<proteinExistence type="inferred from homology"/>
<name>MRAY_BACTN</name>
<accession>Q8A255</accession>
<reference key="1">
    <citation type="journal article" date="2003" name="Science">
        <title>A genomic view of the human-Bacteroides thetaiotaomicron symbiosis.</title>
        <authorList>
            <person name="Xu J."/>
            <person name="Bjursell M.K."/>
            <person name="Himrod J."/>
            <person name="Deng S."/>
            <person name="Carmichael L.K."/>
            <person name="Chiang H.C."/>
            <person name="Hooper L.V."/>
            <person name="Gordon J.I."/>
        </authorList>
    </citation>
    <scope>NUCLEOTIDE SEQUENCE [LARGE SCALE GENOMIC DNA]</scope>
    <source>
        <strain>ATCC 29148 / DSM 2079 / JCM 5827 / CCUG 10774 / NCTC 10582 / VPI-5482 / E50</strain>
    </source>
</reference>
<gene>
    <name evidence="1" type="primary">mraY</name>
    <name type="ordered locus">BT_3451</name>
</gene>
<comment type="function">
    <text evidence="1">Catalyzes the initial step of the lipid cycle reactions in the biosynthesis of the cell wall peptidoglycan: transfers peptidoglycan precursor phospho-MurNAc-pentapeptide from UDP-MurNAc-pentapeptide onto the lipid carrier undecaprenyl phosphate, yielding undecaprenyl-pyrophosphoryl-MurNAc-pentapeptide, known as lipid I.</text>
</comment>
<comment type="catalytic activity">
    <reaction evidence="1">
        <text>UDP-N-acetyl-alpha-D-muramoyl-L-alanyl-gamma-D-glutamyl-meso-2,6-diaminopimeloyl-D-alanyl-D-alanine + di-trans,octa-cis-undecaprenyl phosphate = di-trans,octa-cis-undecaprenyl diphospho-N-acetyl-alpha-D-muramoyl-L-alanyl-D-glutamyl-meso-2,6-diaminopimeloyl-D-alanyl-D-alanine + UMP</text>
        <dbReference type="Rhea" id="RHEA:28386"/>
        <dbReference type="ChEBI" id="CHEBI:57865"/>
        <dbReference type="ChEBI" id="CHEBI:60392"/>
        <dbReference type="ChEBI" id="CHEBI:61386"/>
        <dbReference type="ChEBI" id="CHEBI:61387"/>
        <dbReference type="EC" id="2.7.8.13"/>
    </reaction>
</comment>
<comment type="cofactor">
    <cofactor evidence="1">
        <name>Mg(2+)</name>
        <dbReference type="ChEBI" id="CHEBI:18420"/>
    </cofactor>
</comment>
<comment type="pathway">
    <text evidence="1">Cell wall biogenesis; peptidoglycan biosynthesis.</text>
</comment>
<comment type="subcellular location">
    <subcellularLocation>
        <location evidence="1">Cell inner membrane</location>
        <topology evidence="1">Multi-pass membrane protein</topology>
    </subcellularLocation>
</comment>
<comment type="similarity">
    <text evidence="1">Belongs to the glycosyltransferase 4 family. MraY subfamily.</text>
</comment>
<feature type="chain" id="PRO_0000108784" description="Phospho-N-acetylmuramoyl-pentapeptide-transferase">
    <location>
        <begin position="1"/>
        <end position="422"/>
    </location>
</feature>
<feature type="transmembrane region" description="Helical" evidence="1">
    <location>
        <begin position="28"/>
        <end position="48"/>
    </location>
</feature>
<feature type="transmembrane region" description="Helical" evidence="1">
    <location>
        <begin position="71"/>
        <end position="91"/>
    </location>
</feature>
<feature type="transmembrane region" description="Helical" evidence="1">
    <location>
        <begin position="95"/>
        <end position="115"/>
    </location>
</feature>
<feature type="transmembrane region" description="Helical" evidence="1">
    <location>
        <begin position="136"/>
        <end position="156"/>
    </location>
</feature>
<feature type="transmembrane region" description="Helical" evidence="1">
    <location>
        <begin position="211"/>
        <end position="231"/>
    </location>
</feature>
<feature type="transmembrane region" description="Helical" evidence="1">
    <location>
        <begin position="239"/>
        <end position="259"/>
    </location>
</feature>
<feature type="transmembrane region" description="Helical" evidence="1">
    <location>
        <begin position="279"/>
        <end position="299"/>
    </location>
</feature>
<feature type="transmembrane region" description="Helical" evidence="1">
    <location>
        <begin position="313"/>
        <end position="333"/>
    </location>
</feature>
<feature type="transmembrane region" description="Helical" evidence="1">
    <location>
        <begin position="399"/>
        <end position="419"/>
    </location>
</feature>